<organism>
    <name type="scientific">Arabidopsis thaliana</name>
    <name type="common">Mouse-ear cress</name>
    <dbReference type="NCBI Taxonomy" id="3702"/>
    <lineage>
        <taxon>Eukaryota</taxon>
        <taxon>Viridiplantae</taxon>
        <taxon>Streptophyta</taxon>
        <taxon>Embryophyta</taxon>
        <taxon>Tracheophyta</taxon>
        <taxon>Spermatophyta</taxon>
        <taxon>Magnoliopsida</taxon>
        <taxon>eudicotyledons</taxon>
        <taxon>Gunneridae</taxon>
        <taxon>Pentapetalae</taxon>
        <taxon>rosids</taxon>
        <taxon>malvids</taxon>
        <taxon>Brassicales</taxon>
        <taxon>Brassicaceae</taxon>
        <taxon>Camelineae</taxon>
        <taxon>Arabidopsis</taxon>
    </lineage>
</organism>
<reference key="1">
    <citation type="journal article" date="2000" name="Nature">
        <title>Sequence and analysis of chromosome 1 of the plant Arabidopsis thaliana.</title>
        <authorList>
            <person name="Theologis A."/>
            <person name="Ecker J.R."/>
            <person name="Palm C.J."/>
            <person name="Federspiel N.A."/>
            <person name="Kaul S."/>
            <person name="White O."/>
            <person name="Alonso J."/>
            <person name="Altafi H."/>
            <person name="Araujo R."/>
            <person name="Bowman C.L."/>
            <person name="Brooks S.Y."/>
            <person name="Buehler E."/>
            <person name="Chan A."/>
            <person name="Chao Q."/>
            <person name="Chen H."/>
            <person name="Cheuk R.F."/>
            <person name="Chin C.W."/>
            <person name="Chung M.K."/>
            <person name="Conn L."/>
            <person name="Conway A.B."/>
            <person name="Conway A.R."/>
            <person name="Creasy T.H."/>
            <person name="Dewar K."/>
            <person name="Dunn P."/>
            <person name="Etgu P."/>
            <person name="Feldblyum T.V."/>
            <person name="Feng J.-D."/>
            <person name="Fong B."/>
            <person name="Fujii C.Y."/>
            <person name="Gill J.E."/>
            <person name="Goldsmith A.D."/>
            <person name="Haas B."/>
            <person name="Hansen N.F."/>
            <person name="Hughes B."/>
            <person name="Huizar L."/>
            <person name="Hunter J.L."/>
            <person name="Jenkins J."/>
            <person name="Johnson-Hopson C."/>
            <person name="Khan S."/>
            <person name="Khaykin E."/>
            <person name="Kim C.J."/>
            <person name="Koo H.L."/>
            <person name="Kremenetskaia I."/>
            <person name="Kurtz D.B."/>
            <person name="Kwan A."/>
            <person name="Lam B."/>
            <person name="Langin-Hooper S."/>
            <person name="Lee A."/>
            <person name="Lee J.M."/>
            <person name="Lenz C.A."/>
            <person name="Li J.H."/>
            <person name="Li Y.-P."/>
            <person name="Lin X."/>
            <person name="Liu S.X."/>
            <person name="Liu Z.A."/>
            <person name="Luros J.S."/>
            <person name="Maiti R."/>
            <person name="Marziali A."/>
            <person name="Militscher J."/>
            <person name="Miranda M."/>
            <person name="Nguyen M."/>
            <person name="Nierman W.C."/>
            <person name="Osborne B.I."/>
            <person name="Pai G."/>
            <person name="Peterson J."/>
            <person name="Pham P.K."/>
            <person name="Rizzo M."/>
            <person name="Rooney T."/>
            <person name="Rowley D."/>
            <person name="Sakano H."/>
            <person name="Salzberg S.L."/>
            <person name="Schwartz J.R."/>
            <person name="Shinn P."/>
            <person name="Southwick A.M."/>
            <person name="Sun H."/>
            <person name="Tallon L.J."/>
            <person name="Tambunga G."/>
            <person name="Toriumi M.J."/>
            <person name="Town C.D."/>
            <person name="Utterback T."/>
            <person name="Van Aken S."/>
            <person name="Vaysberg M."/>
            <person name="Vysotskaia V.S."/>
            <person name="Walker M."/>
            <person name="Wu D."/>
            <person name="Yu G."/>
            <person name="Fraser C.M."/>
            <person name="Venter J.C."/>
            <person name="Davis R.W."/>
        </authorList>
    </citation>
    <scope>NUCLEOTIDE SEQUENCE [LARGE SCALE GENOMIC DNA]</scope>
    <source>
        <strain>cv. Columbia</strain>
    </source>
</reference>
<reference key="2">
    <citation type="journal article" date="2017" name="Plant J.">
        <title>Araport11: a complete reannotation of the Arabidopsis thaliana reference genome.</title>
        <authorList>
            <person name="Cheng C.Y."/>
            <person name="Krishnakumar V."/>
            <person name="Chan A.P."/>
            <person name="Thibaud-Nissen F."/>
            <person name="Schobel S."/>
            <person name="Town C.D."/>
        </authorList>
    </citation>
    <scope>GENOME REANNOTATION</scope>
    <source>
        <strain>cv. Columbia</strain>
    </source>
</reference>
<reference key="3">
    <citation type="journal article" date="2003" name="Science">
        <title>Empirical analysis of transcriptional activity in the Arabidopsis genome.</title>
        <authorList>
            <person name="Yamada K."/>
            <person name="Lim J."/>
            <person name="Dale J.M."/>
            <person name="Chen H."/>
            <person name="Shinn P."/>
            <person name="Palm C.J."/>
            <person name="Southwick A.M."/>
            <person name="Wu H.C."/>
            <person name="Kim C.J."/>
            <person name="Nguyen M."/>
            <person name="Pham P.K."/>
            <person name="Cheuk R.F."/>
            <person name="Karlin-Newmann G."/>
            <person name="Liu S.X."/>
            <person name="Lam B."/>
            <person name="Sakano H."/>
            <person name="Wu T."/>
            <person name="Yu G."/>
            <person name="Miranda M."/>
            <person name="Quach H.L."/>
            <person name="Tripp M."/>
            <person name="Chang C.H."/>
            <person name="Lee J.M."/>
            <person name="Toriumi M.J."/>
            <person name="Chan M.M."/>
            <person name="Tang C.C."/>
            <person name="Onodera C.S."/>
            <person name="Deng J.M."/>
            <person name="Akiyama K."/>
            <person name="Ansari Y."/>
            <person name="Arakawa T."/>
            <person name="Banh J."/>
            <person name="Banno F."/>
            <person name="Bowser L."/>
            <person name="Brooks S.Y."/>
            <person name="Carninci P."/>
            <person name="Chao Q."/>
            <person name="Choy N."/>
            <person name="Enju A."/>
            <person name="Goldsmith A.D."/>
            <person name="Gurjal M."/>
            <person name="Hansen N.F."/>
            <person name="Hayashizaki Y."/>
            <person name="Johnson-Hopson C."/>
            <person name="Hsuan V.W."/>
            <person name="Iida K."/>
            <person name="Karnes M."/>
            <person name="Khan S."/>
            <person name="Koesema E."/>
            <person name="Ishida J."/>
            <person name="Jiang P.X."/>
            <person name="Jones T."/>
            <person name="Kawai J."/>
            <person name="Kamiya A."/>
            <person name="Meyers C."/>
            <person name="Nakajima M."/>
            <person name="Narusaka M."/>
            <person name="Seki M."/>
            <person name="Sakurai T."/>
            <person name="Satou M."/>
            <person name="Tamse R."/>
            <person name="Vaysberg M."/>
            <person name="Wallender E.K."/>
            <person name="Wong C."/>
            <person name="Yamamura Y."/>
            <person name="Yuan S."/>
            <person name="Shinozaki K."/>
            <person name="Davis R.W."/>
            <person name="Theologis A."/>
            <person name="Ecker J.R."/>
        </authorList>
    </citation>
    <scope>NUCLEOTIDE SEQUENCE [LARGE SCALE MRNA]</scope>
    <source>
        <strain>cv. Columbia</strain>
    </source>
</reference>
<reference key="4">
    <citation type="journal article" date="2005" name="Cell">
        <title>A new class of transcription factors mediates brassinosteroid-regulated gene expression in Arabidopsis.</title>
        <authorList>
            <person name="Yin Y."/>
            <person name="Vafeados D."/>
            <person name="Tao Y."/>
            <person name="Yoshida S."/>
            <person name="Asami T."/>
            <person name="Chory J."/>
        </authorList>
    </citation>
    <scope>IDENTIFICATION</scope>
    <scope>PHOSPHORYLATION</scope>
</reference>
<dbReference type="EMBL" id="AC005679">
    <property type="protein sequence ID" value="AAC83038.1"/>
    <property type="molecule type" value="Genomic_DNA"/>
</dbReference>
<dbReference type="EMBL" id="CP002684">
    <property type="protein sequence ID" value="AEE36140.1"/>
    <property type="molecule type" value="Genomic_DNA"/>
</dbReference>
<dbReference type="EMBL" id="AY050430">
    <property type="protein sequence ID" value="AAK91446.1"/>
    <property type="molecule type" value="mRNA"/>
</dbReference>
<dbReference type="EMBL" id="AY090331">
    <property type="protein sequence ID" value="AAL90992.1"/>
    <property type="molecule type" value="mRNA"/>
</dbReference>
<dbReference type="PIR" id="H96815">
    <property type="entry name" value="H96815"/>
</dbReference>
<dbReference type="RefSeq" id="NP_565187.1">
    <property type="nucleotide sequence ID" value="NM_106517.2"/>
</dbReference>
<dbReference type="SMR" id="Q9ZV88"/>
<dbReference type="BioGRID" id="29425">
    <property type="interactions" value="2"/>
</dbReference>
<dbReference type="FunCoup" id="Q9ZV88">
    <property type="interactions" value="1365"/>
</dbReference>
<dbReference type="STRING" id="3702.Q9ZV88"/>
<dbReference type="GlyGen" id="Q9ZV88">
    <property type="glycosylation" value="1 site"/>
</dbReference>
<dbReference type="iPTMnet" id="Q9ZV88"/>
<dbReference type="PaxDb" id="3702-AT1G78700.1"/>
<dbReference type="ProteomicsDB" id="240825"/>
<dbReference type="EnsemblPlants" id="AT1G78700.1">
    <property type="protein sequence ID" value="AT1G78700.1"/>
    <property type="gene ID" value="AT1G78700"/>
</dbReference>
<dbReference type="GeneID" id="844206"/>
<dbReference type="Gramene" id="AT1G78700.1">
    <property type="protein sequence ID" value="AT1G78700.1"/>
    <property type="gene ID" value="AT1G78700"/>
</dbReference>
<dbReference type="KEGG" id="ath:AT1G78700"/>
<dbReference type="Araport" id="AT1G78700"/>
<dbReference type="TAIR" id="AT1G78700">
    <property type="gene designation" value="BEH4"/>
</dbReference>
<dbReference type="eggNOG" id="ENOG502QQEG">
    <property type="taxonomic scope" value="Eukaryota"/>
</dbReference>
<dbReference type="HOGENOM" id="CLU_036256_0_0_1"/>
<dbReference type="InParanoid" id="Q9ZV88"/>
<dbReference type="OMA" id="MIHEECA"/>
<dbReference type="OrthoDB" id="667790at2759"/>
<dbReference type="PhylomeDB" id="Q9ZV88"/>
<dbReference type="PRO" id="PR:Q9ZV88"/>
<dbReference type="Proteomes" id="UP000006548">
    <property type="component" value="Chromosome 1"/>
</dbReference>
<dbReference type="ExpressionAtlas" id="Q9ZV88">
    <property type="expression patterns" value="baseline and differential"/>
</dbReference>
<dbReference type="GO" id="GO:0003677">
    <property type="term" value="F:DNA binding"/>
    <property type="evidence" value="ECO:0007669"/>
    <property type="project" value="UniProtKB-KW"/>
</dbReference>
<dbReference type="GO" id="GO:0003700">
    <property type="term" value="F:DNA-binding transcription factor activity"/>
    <property type="evidence" value="ECO:0007669"/>
    <property type="project" value="InterPro"/>
</dbReference>
<dbReference type="GO" id="GO:0009742">
    <property type="term" value="P:brassinosteroid mediated signaling pathway"/>
    <property type="evidence" value="ECO:0007669"/>
    <property type="project" value="InterPro"/>
</dbReference>
<dbReference type="GO" id="GO:0006351">
    <property type="term" value="P:DNA-templated transcription"/>
    <property type="evidence" value="ECO:0007669"/>
    <property type="project" value="InterPro"/>
</dbReference>
<dbReference type="GO" id="GO:0006355">
    <property type="term" value="P:regulation of DNA-templated transcription"/>
    <property type="evidence" value="ECO:0000304"/>
    <property type="project" value="TAIR"/>
</dbReference>
<dbReference type="InterPro" id="IPR008540">
    <property type="entry name" value="BES1_N"/>
</dbReference>
<dbReference type="InterPro" id="IPR033264">
    <property type="entry name" value="BZR"/>
</dbReference>
<dbReference type="PANTHER" id="PTHR31506">
    <property type="entry name" value="BES1/BZR1 HOMOLOG PROTEIN 3-RELATED"/>
    <property type="match status" value="1"/>
</dbReference>
<dbReference type="PANTHER" id="PTHR31506:SF51">
    <property type="entry name" value="BES1_BZR1 HOMOLOG PROTEIN 4"/>
    <property type="match status" value="1"/>
</dbReference>
<dbReference type="Pfam" id="PF05687">
    <property type="entry name" value="BES1_N"/>
    <property type="match status" value="1"/>
</dbReference>
<feature type="chain" id="PRO_0000113276" description="BES1/BZR1 homolog protein 4">
    <location>
        <begin position="1"/>
        <end position="325"/>
    </location>
</feature>
<feature type="region of interest" description="Disordered" evidence="3">
    <location>
        <begin position="1"/>
        <end position="21"/>
    </location>
</feature>
<feature type="region of interest" description="Required for DNA-binding" evidence="1">
    <location>
        <begin position="6"/>
        <end position="89"/>
    </location>
</feature>
<feature type="region of interest" description="Disordered" evidence="3">
    <location>
        <begin position="304"/>
        <end position="325"/>
    </location>
</feature>
<feature type="modified residue" description="Phosphothreonine" evidence="2">
    <location>
        <position position="169"/>
    </location>
</feature>
<comment type="PTM">
    <text evidence="4">Phosphorylated. Phosphorylation increases protein degradation.</text>
</comment>
<comment type="similarity">
    <text evidence="5">Belongs to the BZR/LAT61 family.</text>
</comment>
<gene>
    <name type="primary">BEH4</name>
    <name type="ordered locus">At1g78700</name>
    <name type="ORF">F9K20.26</name>
</gene>
<keyword id="KW-0238">DNA-binding</keyword>
<keyword id="KW-0597">Phosphoprotein</keyword>
<keyword id="KW-1185">Reference proteome</keyword>
<keyword id="KW-0804">Transcription</keyword>
<keyword id="KW-0805">Transcription regulation</keyword>
<name>BEH4_ARATH</name>
<accession>Q9ZV88</accession>
<evidence type="ECO:0000250" key="1"/>
<evidence type="ECO:0000250" key="2">
    <source>
        <dbReference type="UniProtKB" id="Q9LN63"/>
    </source>
</evidence>
<evidence type="ECO:0000256" key="3">
    <source>
        <dbReference type="SAM" id="MobiDB-lite"/>
    </source>
</evidence>
<evidence type="ECO:0000269" key="4">
    <source>
    </source>
</evidence>
<evidence type="ECO:0000305" key="5"/>
<proteinExistence type="evidence at protein level"/>
<protein>
    <recommendedName>
        <fullName>BES1/BZR1 homolog protein 4</fullName>
    </recommendedName>
</protein>
<sequence length="325" mass="34697">MTSGTRMPTWRERENNKRRERRRRAIAAKIFTGLRMYGNYELPKHCDNNEVLKALCNEAGWIVEPDGTTYRKGCSRPVERMEIGGGSATASPCSSYQPSPCASYNPSPGSSNFMSPASSSFANLTSGDGQSLIPWLKHLSTTSSSSASSSSRLPNYLYIPGGSISAPVTPPLSSPTARTPRMNTDWQQLNNSFFVSSTPPSPTRQIIPDSEWFSGIQLAQSVPASPTFSLVSQNPFGFKEEAASAAGGGGGSRMWTPGQSGTCSPAIPPGADQTADVPMSEAVAPPEFAFGSNTNGLVKAWEGERIHEESGSDDLELTLGNSSTR</sequence>